<name>V_PI2H</name>
<comment type="function">
    <text evidence="3 4 7">Plays an essential role in the inhibition of host immune response. Prevents the establishment of cellular antiviral state by blocking interferon-alpha/beta (IFN-alpha/beta) production and signaling pathway. Interacts with host IFIH1/MDA5 and DHX58/LGP2 to inhibit the transduction pathway involved in the activation of IFN-beta promoter, thus protecting the virus against cell antiviral state. Efficiently blocks type I IFN signaling following infection by targeting host STAT2 for proteasomal degradation. Also plays a role in viral growth by promoting host RhoA-induced F-actin formation (PubMed:30165310).</text>
</comment>
<comment type="subunit">
    <text evidence="4 5">Interacts with host IFIH1/MDA5 and DHX58/LGP2. Forms with host DDB1, CUL4A, STAT1 and STAT2 the HPIV2 virus V-dependent complex (VDC); this complex targets host STAT2 to proteasomal degradation.</text>
</comment>
<comment type="subcellular location">
    <subcellularLocation>
        <location evidence="7 8">Host nucleus</location>
    </subcellularLocation>
</comment>
<comment type="RNA editing">
    <location>
        <position position="164" evidence="6"/>
    </location>
    <text>Partially edited. RNA editing at this position consists of an insertion of two guanine nucleotides. The sequence displayed here is the V protein, derived from the unedited RNA. The edited RNA gives rise to the P protein (AC P23055).</text>
</comment>
<comment type="similarity">
    <text evidence="9">Belongs to the paramyxoviruses V protein family.</text>
</comment>
<protein>
    <recommendedName>
        <fullName>Non-structural protein V</fullName>
    </recommendedName>
</protein>
<accession>P19847</accession>
<organismHost>
    <name type="scientific">Homo sapiens</name>
    <name type="common">Human</name>
    <dbReference type="NCBI Taxonomy" id="9606"/>
</organismHost>
<feature type="chain" id="PRO_0000142815" description="Non-structural protein V">
    <location>
        <begin position="1"/>
        <end position="225"/>
    </location>
</feature>
<feature type="region of interest" description="Nuclear localization signal" evidence="8">
    <location>
        <begin position="65"/>
        <end position="72"/>
    </location>
</feature>
<feature type="region of interest" description="Disordered" evidence="2">
    <location>
        <begin position="145"/>
        <end position="173"/>
    </location>
</feature>
<feature type="compositionally biased region" description="Polar residues" evidence="2">
    <location>
        <begin position="145"/>
        <end position="157"/>
    </location>
</feature>
<feature type="binding site" evidence="1">
    <location>
        <position position="174"/>
    </location>
    <ligand>
        <name>Zn(2+)</name>
        <dbReference type="ChEBI" id="CHEBI:29105"/>
        <label>1</label>
    </ligand>
</feature>
<feature type="binding site" evidence="1">
    <location>
        <position position="193"/>
    </location>
    <ligand>
        <name>Zn(2+)</name>
        <dbReference type="ChEBI" id="CHEBI:29105"/>
        <label>1</label>
    </ligand>
</feature>
<feature type="binding site" evidence="1">
    <location>
        <position position="197"/>
    </location>
    <ligand>
        <name>Zn(2+)</name>
        <dbReference type="ChEBI" id="CHEBI:29105"/>
        <label>2</label>
    </ligand>
</feature>
<feature type="binding site" evidence="1">
    <location>
        <position position="209"/>
    </location>
    <ligand>
        <name>Zn(2+)</name>
        <dbReference type="ChEBI" id="CHEBI:29105"/>
        <label>2</label>
    </ligand>
</feature>
<feature type="binding site" evidence="1">
    <location>
        <position position="211"/>
    </location>
    <ligand>
        <name>Zn(2+)</name>
        <dbReference type="ChEBI" id="CHEBI:29105"/>
        <label>2</label>
    </ligand>
</feature>
<feature type="binding site" evidence="1">
    <location>
        <position position="214"/>
    </location>
    <ligand>
        <name>Zn(2+)</name>
        <dbReference type="ChEBI" id="CHEBI:29105"/>
        <label>2</label>
    </ligand>
</feature>
<feature type="binding site" evidence="1">
    <location>
        <position position="218"/>
    </location>
    <ligand>
        <name>Zn(2+)</name>
        <dbReference type="ChEBI" id="CHEBI:29105"/>
        <label>1</label>
    </ligand>
</feature>
<feature type="binding site" evidence="1">
    <location>
        <position position="221"/>
    </location>
    <ligand>
        <name>Zn(2+)</name>
        <dbReference type="ChEBI" id="CHEBI:29105"/>
        <label>1</label>
    </ligand>
</feature>
<organism>
    <name type="scientific">Human parainfluenza 2 virus</name>
    <name type="common">HPIV-2</name>
    <dbReference type="NCBI Taxonomy" id="2560525"/>
    <lineage>
        <taxon>Viruses</taxon>
        <taxon>Riboviria</taxon>
        <taxon>Orthornavirae</taxon>
        <taxon>Negarnaviricota</taxon>
        <taxon>Haploviricotina</taxon>
        <taxon>Monjiviricetes</taxon>
        <taxon>Mononegavirales</taxon>
        <taxon>Paramyxoviridae</taxon>
        <taxon>Rubulavirinae</taxon>
        <taxon>Orthorubulavirus</taxon>
        <taxon>Orthorubulavirus laryngotracheitidis</taxon>
    </lineage>
</organism>
<proteinExistence type="evidence at protein level"/>
<evidence type="ECO:0000250" key="1"/>
<evidence type="ECO:0000256" key="2">
    <source>
        <dbReference type="SAM" id="MobiDB-lite"/>
    </source>
</evidence>
<evidence type="ECO:0000269" key="3">
    <source>
    </source>
</evidence>
<evidence type="ECO:0000269" key="4">
    <source>
    </source>
</evidence>
<evidence type="ECO:0000269" key="5">
    <source>
    </source>
</evidence>
<evidence type="ECO:0000269" key="6">
    <source>
    </source>
</evidence>
<evidence type="ECO:0000269" key="7">
    <source>
    </source>
</evidence>
<evidence type="ECO:0000269" key="8">
    <source>
    </source>
</evidence>
<evidence type="ECO:0000305" key="9"/>
<keyword id="KW-1048">Host nucleus</keyword>
<keyword id="KW-0945">Host-virus interaction</keyword>
<keyword id="KW-1090">Inhibition of host innate immune response by virus</keyword>
<keyword id="KW-1114">Inhibition of host interferon signaling pathway by virus</keyword>
<keyword id="KW-1089">Inhibition of host MDA5 by virus</keyword>
<keyword id="KW-1113">Inhibition of host RLR pathway by virus</keyword>
<keyword id="KW-1106">Inhibition of host STAT2 by virus</keyword>
<keyword id="KW-0922">Interferon antiviral system evasion</keyword>
<keyword id="KW-0479">Metal-binding</keyword>
<keyword id="KW-0691">RNA editing</keyword>
<keyword id="KW-0899">Viral immunoevasion</keyword>
<keyword id="KW-0862">Zinc</keyword>
<gene>
    <name type="primary">P/V</name>
</gene>
<dbReference type="EMBL" id="M37748">
    <property type="protein sequence ID" value="AAA46808.1"/>
    <property type="molecule type" value="Genomic_RNA"/>
</dbReference>
<dbReference type="PIR" id="A35322">
    <property type="entry name" value="MNNZP2"/>
</dbReference>
<dbReference type="SMR" id="P19847"/>
<dbReference type="IntAct" id="P19847">
    <property type="interactions" value="2"/>
</dbReference>
<dbReference type="GO" id="GO:0042025">
    <property type="term" value="C:host cell nucleus"/>
    <property type="evidence" value="ECO:0007669"/>
    <property type="project" value="UniProtKB-SubCell"/>
</dbReference>
<dbReference type="GO" id="GO:0046872">
    <property type="term" value="F:metal ion binding"/>
    <property type="evidence" value="ECO:0007669"/>
    <property type="project" value="UniProtKB-KW"/>
</dbReference>
<dbReference type="GO" id="GO:0039554">
    <property type="term" value="P:symbiont-mediated suppression of host cytoplasmic pattern recognition receptor signaling pathway via inhibition of MDA-5 activity"/>
    <property type="evidence" value="ECO:0007669"/>
    <property type="project" value="UniProtKB-KW"/>
</dbReference>
<dbReference type="GO" id="GO:0039564">
    <property type="term" value="P:symbiont-mediated suppression of host JAK-STAT cascade via inhibition of STAT2 activity"/>
    <property type="evidence" value="ECO:0007669"/>
    <property type="project" value="UniProtKB-KW"/>
</dbReference>
<dbReference type="GO" id="GO:0039502">
    <property type="term" value="P:symbiont-mediated suppression of host type I interferon-mediated signaling pathway"/>
    <property type="evidence" value="ECO:0007669"/>
    <property type="project" value="UniProtKB-KW"/>
</dbReference>
<dbReference type="Gene3D" id="4.10.80.340">
    <property type="match status" value="1"/>
</dbReference>
<dbReference type="InterPro" id="IPR024279">
    <property type="entry name" value="Paramyx_V_Zn-bd"/>
</dbReference>
<dbReference type="InterPro" id="IPR025909">
    <property type="entry name" value="Soyouz_module"/>
</dbReference>
<dbReference type="Pfam" id="PF14313">
    <property type="entry name" value="Soyouz_module"/>
    <property type="match status" value="1"/>
</dbReference>
<dbReference type="Pfam" id="PF13008">
    <property type="entry name" value="zf-Paramyx-P"/>
    <property type="match status" value="1"/>
</dbReference>
<sequence length="225" mass="24121">MAEEPTYTTEQVDELIHAGLGTVDFFLSRPIDAQSSLGKGSIPPGVTAVLTSAAEAKSKPVAAGPVKPRRKKVISNTTPYTIADNIPPEKLPINTPIPNPLLPLARPHGKMTDIDIVTGNITEGSYKGVELAKLGKQTLLTRFTSNEPVSSAGSAQDPNFKRGGANRERARGNHRREWSIAWVGDQVKVFEWCNPRCAPVTASARKFTCTCGSCPSICGECEGDH</sequence>
<reference key="1">
    <citation type="journal article" date="1990" name="Virology">
        <title>Two nontemplated nucleotide additions are required to generate the P mRNA of parainfluenza virus type 2 since the RNA genome encodes protein V.</title>
        <authorList>
            <person name="Southern J.A."/>
            <person name="Precious B."/>
            <person name="Randall R.E."/>
        </authorList>
    </citation>
    <scope>NUCLEOTIDE SEQUENCE [GENOMIC RNA]</scope>
    <scope>RNA EDITING</scope>
</reference>
<reference key="2">
    <citation type="journal article" date="2001" name="Virology">
        <title>The V protein of human parainfluenza virus 2 antagonizes type I interferon responses by destabilizing signal transducer and activator of transcription 2.</title>
        <authorList>
            <person name="Parisien J.P."/>
            <person name="Lau J.F."/>
            <person name="Rodriguez J.J."/>
            <person name="Sullivan B.M."/>
            <person name="Moscona A."/>
            <person name="Parks G.D."/>
            <person name="Lamb R.A."/>
            <person name="Horvath C.M."/>
        </authorList>
    </citation>
    <scope>FUNCTION</scope>
</reference>
<reference key="3">
    <citation type="journal article" date="2002" name="Virology">
        <title>Paramyxoviruses SV5 and HPIV2 assemble STAT protein ubiquitin ligase complexes from cellular components.</title>
        <authorList>
            <person name="Ulane C.M."/>
            <person name="Horvath C.M."/>
        </authorList>
    </citation>
    <scope>FUNCTION</scope>
    <scope>INTERACTION WITH HOST STAT1; STAT2; DDB1 AND CUL4A</scope>
</reference>
<reference key="4">
    <citation type="journal article" date="2004" name="Proc. Natl. Acad. Sci. U.S.A.">
        <title>The V proteins of paramyxoviruses bind the IFN-inducible RNA helicase, mda-5, and inhibit its activation of the IFN-beta promoter.</title>
        <authorList>
            <person name="Andrejeva J."/>
            <person name="Childs K.S."/>
            <person name="Young D.F."/>
            <person name="Carlos T.S."/>
            <person name="Stock N."/>
            <person name="Goodbourn S."/>
            <person name="Randall R.E."/>
        </authorList>
    </citation>
    <scope>INTERACTION WITH HUMAN IFIH1/MDA5</scope>
    <scope>INTERFERON EVASION</scope>
</reference>
<reference key="5">
    <citation type="journal article" date="2016" name="J. Virol.">
        <title>Graf1 Controls the Growth of Human Parainfluenza Virus Type 2 through Inactivation of RhoA Signaling.</title>
        <authorList>
            <person name="Ohta K."/>
            <person name="Goto H."/>
            <person name="Matsumoto Y."/>
            <person name="Yumine N."/>
            <person name="Tsurudome M."/>
            <person name="Nishio M."/>
        </authorList>
    </citation>
    <scope>FUNCTION</scope>
    <scope>SUBCELLULAR LOCATION</scope>
    <scope>INTERACTION WITH HOST ARHGAP26</scope>
</reference>
<reference key="6">
    <citation type="journal article" date="2019" name="Virology">
        <title>Nucleocytoplasmic shuttling of the human parainfluenza virus type 2 phosphoprotein.</title>
        <authorList>
            <person name="Ohtsuka J."/>
            <person name="Matsumoto Y."/>
            <person name="Ohta K."/>
            <person name="Fukumura M."/>
            <person name="Tsurudome M."/>
            <person name="Nosaka T."/>
            <person name="Nishio M."/>
        </authorList>
    </citation>
    <scope>SUBCELLULAR LOCATION</scope>
    <scope>INTERACTION WITH HOST KPNA1 AND KPNA6</scope>
</reference>
<reference key="7">
    <citation type="journal article" date="2018" name="Virology">
        <title>The V protein of human parainfluenza virus type 2 promotes RhoA-induced filamentous actin formation.</title>
        <authorList>
            <person name="Ohta K."/>
            <person name="Matsumoto Y."/>
            <person name="Yumine N."/>
            <person name="Nishio M."/>
        </authorList>
    </citation>
    <scope>FUNCTION</scope>
    <scope>SUBCELLULAR LOCATION</scope>
</reference>